<reference key="1">
    <citation type="submission" date="2006-09" db="EMBL/GenBank/DDBJ databases">
        <title>Complete sequence of chromosome 1 of Shewanella sp. ANA-3.</title>
        <authorList>
            <person name="Copeland A."/>
            <person name="Lucas S."/>
            <person name="Lapidus A."/>
            <person name="Barry K."/>
            <person name="Detter J.C."/>
            <person name="Glavina del Rio T."/>
            <person name="Hammon N."/>
            <person name="Israni S."/>
            <person name="Dalin E."/>
            <person name="Tice H."/>
            <person name="Pitluck S."/>
            <person name="Chertkov O."/>
            <person name="Brettin T."/>
            <person name="Bruce D."/>
            <person name="Han C."/>
            <person name="Tapia R."/>
            <person name="Gilna P."/>
            <person name="Schmutz J."/>
            <person name="Larimer F."/>
            <person name="Land M."/>
            <person name="Hauser L."/>
            <person name="Kyrpides N."/>
            <person name="Kim E."/>
            <person name="Newman D."/>
            <person name="Salticov C."/>
            <person name="Konstantinidis K."/>
            <person name="Klappenback J."/>
            <person name="Tiedje J."/>
            <person name="Richardson P."/>
        </authorList>
    </citation>
    <scope>NUCLEOTIDE SEQUENCE [LARGE SCALE GENOMIC DNA]</scope>
    <source>
        <strain>ANA-3</strain>
    </source>
</reference>
<proteinExistence type="inferred from homology"/>
<accession>A0L1Q8</accession>
<evidence type="ECO:0000255" key="1">
    <source>
        <dbReference type="HAMAP-Rule" id="MF_01026"/>
    </source>
</evidence>
<keyword id="KW-0004">4Fe-4S</keyword>
<keyword id="KW-0028">Amino-acid biosynthesis</keyword>
<keyword id="KW-0100">Branched-chain amino acid biosynthesis</keyword>
<keyword id="KW-0408">Iron</keyword>
<keyword id="KW-0411">Iron-sulfur</keyword>
<keyword id="KW-0432">Leucine biosynthesis</keyword>
<keyword id="KW-0456">Lyase</keyword>
<keyword id="KW-0479">Metal-binding</keyword>
<name>LEUC_SHESA</name>
<dbReference type="EC" id="4.2.1.33" evidence="1"/>
<dbReference type="EMBL" id="CP000469">
    <property type="protein sequence ID" value="ABK49977.1"/>
    <property type="molecule type" value="Genomic_DNA"/>
</dbReference>
<dbReference type="RefSeq" id="WP_011718508.1">
    <property type="nucleotide sequence ID" value="NC_008577.1"/>
</dbReference>
<dbReference type="SMR" id="A0L1Q8"/>
<dbReference type="STRING" id="94122.Shewana3_3759"/>
<dbReference type="KEGG" id="shn:Shewana3_3759"/>
<dbReference type="eggNOG" id="COG0065">
    <property type="taxonomic scope" value="Bacteria"/>
</dbReference>
<dbReference type="HOGENOM" id="CLU_006714_3_4_6"/>
<dbReference type="OrthoDB" id="9802769at2"/>
<dbReference type="UniPathway" id="UPA00048">
    <property type="reaction ID" value="UER00071"/>
</dbReference>
<dbReference type="Proteomes" id="UP000002589">
    <property type="component" value="Chromosome"/>
</dbReference>
<dbReference type="GO" id="GO:0003861">
    <property type="term" value="F:3-isopropylmalate dehydratase activity"/>
    <property type="evidence" value="ECO:0007669"/>
    <property type="project" value="UniProtKB-UniRule"/>
</dbReference>
<dbReference type="GO" id="GO:0051539">
    <property type="term" value="F:4 iron, 4 sulfur cluster binding"/>
    <property type="evidence" value="ECO:0007669"/>
    <property type="project" value="UniProtKB-KW"/>
</dbReference>
<dbReference type="GO" id="GO:0046872">
    <property type="term" value="F:metal ion binding"/>
    <property type="evidence" value="ECO:0007669"/>
    <property type="project" value="UniProtKB-KW"/>
</dbReference>
<dbReference type="GO" id="GO:0009098">
    <property type="term" value="P:L-leucine biosynthetic process"/>
    <property type="evidence" value="ECO:0007669"/>
    <property type="project" value="UniProtKB-UniRule"/>
</dbReference>
<dbReference type="CDD" id="cd01583">
    <property type="entry name" value="IPMI"/>
    <property type="match status" value="1"/>
</dbReference>
<dbReference type="FunFam" id="3.30.499.10:FF:000006">
    <property type="entry name" value="3-isopropylmalate dehydratase large subunit"/>
    <property type="match status" value="1"/>
</dbReference>
<dbReference type="FunFam" id="3.30.499.10:FF:000007">
    <property type="entry name" value="3-isopropylmalate dehydratase large subunit"/>
    <property type="match status" value="1"/>
</dbReference>
<dbReference type="Gene3D" id="3.30.499.10">
    <property type="entry name" value="Aconitase, domain 3"/>
    <property type="match status" value="2"/>
</dbReference>
<dbReference type="HAMAP" id="MF_01026">
    <property type="entry name" value="LeuC_type1"/>
    <property type="match status" value="1"/>
</dbReference>
<dbReference type="InterPro" id="IPR004430">
    <property type="entry name" value="3-IsopropMal_deHydase_lsu"/>
</dbReference>
<dbReference type="InterPro" id="IPR015931">
    <property type="entry name" value="Acnase/IPM_dHydase_lsu_aba_1/3"/>
</dbReference>
<dbReference type="InterPro" id="IPR001030">
    <property type="entry name" value="Acoase/IPM_deHydtase_lsu_aba"/>
</dbReference>
<dbReference type="InterPro" id="IPR018136">
    <property type="entry name" value="Aconitase_4Fe-4S_BS"/>
</dbReference>
<dbReference type="InterPro" id="IPR036008">
    <property type="entry name" value="Aconitase_4Fe-4S_dom"/>
</dbReference>
<dbReference type="InterPro" id="IPR050067">
    <property type="entry name" value="IPM_dehydratase_rel_enz"/>
</dbReference>
<dbReference type="InterPro" id="IPR033941">
    <property type="entry name" value="IPMI_cat"/>
</dbReference>
<dbReference type="NCBIfam" id="TIGR00170">
    <property type="entry name" value="leuC"/>
    <property type="match status" value="1"/>
</dbReference>
<dbReference type="NCBIfam" id="NF004016">
    <property type="entry name" value="PRK05478.1"/>
    <property type="match status" value="1"/>
</dbReference>
<dbReference type="NCBIfam" id="NF009116">
    <property type="entry name" value="PRK12466.1"/>
    <property type="match status" value="1"/>
</dbReference>
<dbReference type="PANTHER" id="PTHR43822:SF9">
    <property type="entry name" value="3-ISOPROPYLMALATE DEHYDRATASE"/>
    <property type="match status" value="1"/>
</dbReference>
<dbReference type="PANTHER" id="PTHR43822">
    <property type="entry name" value="HOMOACONITASE, MITOCHONDRIAL-RELATED"/>
    <property type="match status" value="1"/>
</dbReference>
<dbReference type="Pfam" id="PF00330">
    <property type="entry name" value="Aconitase"/>
    <property type="match status" value="1"/>
</dbReference>
<dbReference type="PRINTS" id="PR00415">
    <property type="entry name" value="ACONITASE"/>
</dbReference>
<dbReference type="SUPFAM" id="SSF53732">
    <property type="entry name" value="Aconitase iron-sulfur domain"/>
    <property type="match status" value="1"/>
</dbReference>
<dbReference type="PROSITE" id="PS00450">
    <property type="entry name" value="ACONITASE_1"/>
    <property type="match status" value="1"/>
</dbReference>
<dbReference type="PROSITE" id="PS01244">
    <property type="entry name" value="ACONITASE_2"/>
    <property type="match status" value="1"/>
</dbReference>
<comment type="function">
    <text evidence="1">Catalyzes the isomerization between 2-isopropylmalate and 3-isopropylmalate, via the formation of 2-isopropylmaleate.</text>
</comment>
<comment type="catalytic activity">
    <reaction evidence="1">
        <text>(2R,3S)-3-isopropylmalate = (2S)-2-isopropylmalate</text>
        <dbReference type="Rhea" id="RHEA:32287"/>
        <dbReference type="ChEBI" id="CHEBI:1178"/>
        <dbReference type="ChEBI" id="CHEBI:35121"/>
        <dbReference type="EC" id="4.2.1.33"/>
    </reaction>
</comment>
<comment type="cofactor">
    <cofactor evidence="1">
        <name>[4Fe-4S] cluster</name>
        <dbReference type="ChEBI" id="CHEBI:49883"/>
    </cofactor>
    <text evidence="1">Binds 1 [4Fe-4S] cluster per subunit.</text>
</comment>
<comment type="pathway">
    <text evidence="1">Amino-acid biosynthesis; L-leucine biosynthesis; L-leucine from 3-methyl-2-oxobutanoate: step 2/4.</text>
</comment>
<comment type="subunit">
    <text evidence="1">Heterodimer of LeuC and LeuD.</text>
</comment>
<comment type="similarity">
    <text evidence="1">Belongs to the aconitase/IPM isomerase family. LeuC type 1 subfamily.</text>
</comment>
<protein>
    <recommendedName>
        <fullName evidence="1">3-isopropylmalate dehydratase large subunit</fullName>
        <ecNumber evidence="1">4.2.1.33</ecNumber>
    </recommendedName>
    <alternativeName>
        <fullName evidence="1">Alpha-IPM isomerase</fullName>
        <shortName evidence="1">IPMI</shortName>
    </alternativeName>
    <alternativeName>
        <fullName evidence="1">Isopropylmalate isomerase</fullName>
    </alternativeName>
</protein>
<sequence>MTTPSTSNAPKTLYQKVWDAHVVATPEGEAPIIYVDRHLVHEVTSPQAFSGLKVAGRKLRAPEKTFATMDHNTSTRSASLDALSPMARTQVETLAQNCKDFGVRLYDIHHPNQGIVHVMGPELGITLPGTVIVCGDSHTATHGAFGALAFGIGTSEVEHVLATQTLRQLKAKTMKIEVRGQVTDGVTAKDIVLAIIGKIGMDGGTGYVVEFCGEAIEALSMEGRMTVCNMAIEMGAKAGMVAPDQTTFDYLEGREFAPKGEDWAEAVAAWKALKTDVGAEFDATVVLDAANIAPQLTWGTNPGQVVAIDAPVPNPADEANPTIRASMEKALDYIGLTAGTPMTDVAINKVFIGSCTNSRIEDLRSAAKQAKGRKVASGVTAIVVPGSGQVKAQAEAEGLDKIFIEAGFEWRLPGCSMCLAMNDDRLEAGDRCASTSNRNFEGRQGRGSRTHLVSPAMAAAAAIAGHFVDIRKPY</sequence>
<organism>
    <name type="scientific">Shewanella sp. (strain ANA-3)</name>
    <dbReference type="NCBI Taxonomy" id="94122"/>
    <lineage>
        <taxon>Bacteria</taxon>
        <taxon>Pseudomonadati</taxon>
        <taxon>Pseudomonadota</taxon>
        <taxon>Gammaproteobacteria</taxon>
        <taxon>Alteromonadales</taxon>
        <taxon>Shewanellaceae</taxon>
        <taxon>Shewanella</taxon>
    </lineage>
</organism>
<gene>
    <name evidence="1" type="primary">leuC</name>
    <name type="ordered locus">Shewana3_3759</name>
</gene>
<feature type="chain" id="PRO_1000063607" description="3-isopropylmalate dehydratase large subunit">
    <location>
        <begin position="1"/>
        <end position="474"/>
    </location>
</feature>
<feature type="binding site" evidence="1">
    <location>
        <position position="355"/>
    </location>
    <ligand>
        <name>[4Fe-4S] cluster</name>
        <dbReference type="ChEBI" id="CHEBI:49883"/>
    </ligand>
</feature>
<feature type="binding site" evidence="1">
    <location>
        <position position="415"/>
    </location>
    <ligand>
        <name>[4Fe-4S] cluster</name>
        <dbReference type="ChEBI" id="CHEBI:49883"/>
    </ligand>
</feature>
<feature type="binding site" evidence="1">
    <location>
        <position position="418"/>
    </location>
    <ligand>
        <name>[4Fe-4S] cluster</name>
        <dbReference type="ChEBI" id="CHEBI:49883"/>
    </ligand>
</feature>